<keyword id="KW-0064">Aspartyl protease</keyword>
<keyword id="KW-0997">Cell inner membrane</keyword>
<keyword id="KW-1003">Cell membrane</keyword>
<keyword id="KW-0378">Hydrolase</keyword>
<keyword id="KW-0472">Membrane</keyword>
<keyword id="KW-0645">Protease</keyword>
<keyword id="KW-0812">Transmembrane</keyword>
<keyword id="KW-1133">Transmembrane helix</keyword>
<proteinExistence type="inferred from homology"/>
<organism>
    <name type="scientific">Porphyromonas gingivalis (strain ATCC 33277 / DSM 20709 / CIP 103683 / JCM 12257 / NCTC 11834 / 2561)</name>
    <dbReference type="NCBI Taxonomy" id="431947"/>
    <lineage>
        <taxon>Bacteria</taxon>
        <taxon>Pseudomonadati</taxon>
        <taxon>Bacteroidota</taxon>
        <taxon>Bacteroidia</taxon>
        <taxon>Bacteroidales</taxon>
        <taxon>Porphyromonadaceae</taxon>
        <taxon>Porphyromonas</taxon>
    </lineage>
</organism>
<feature type="chain" id="PRO_1000097271" description="Lipoprotein signal peptidase">
    <location>
        <begin position="1"/>
        <end position="226"/>
    </location>
</feature>
<feature type="transmembrane region" description="Helical" evidence="1">
    <location>
        <begin position="12"/>
        <end position="32"/>
    </location>
</feature>
<feature type="transmembrane region" description="Helical" evidence="1">
    <location>
        <begin position="69"/>
        <end position="89"/>
    </location>
</feature>
<feature type="transmembrane region" description="Helical" evidence="1">
    <location>
        <begin position="103"/>
        <end position="123"/>
    </location>
</feature>
<feature type="transmembrane region" description="Helical" evidence="1">
    <location>
        <begin position="173"/>
        <end position="193"/>
    </location>
</feature>
<feature type="active site" evidence="1">
    <location>
        <position position="150"/>
    </location>
</feature>
<feature type="active site" evidence="1">
    <location>
        <position position="184"/>
    </location>
</feature>
<reference key="1">
    <citation type="journal article" date="2008" name="DNA Res.">
        <title>Determination of the genome sequence of Porphyromonas gingivalis strain ATCC 33277 and genomic comparison with strain W83 revealed extensive genome rearrangements in P. gingivalis.</title>
        <authorList>
            <person name="Naito M."/>
            <person name="Hirakawa H."/>
            <person name="Yamashita A."/>
            <person name="Ohara N."/>
            <person name="Shoji M."/>
            <person name="Yukitake H."/>
            <person name="Nakayama K."/>
            <person name="Toh H."/>
            <person name="Yoshimura F."/>
            <person name="Kuhara S."/>
            <person name="Hattori M."/>
            <person name="Hayashi T."/>
            <person name="Nakayama K."/>
        </authorList>
    </citation>
    <scope>NUCLEOTIDE SEQUENCE [LARGE SCALE GENOMIC DNA]</scope>
    <source>
        <strain>ATCC 33277 / DSM 20709 / CIP 103683 / JCM 12257 / NCTC 11834 / 2561</strain>
    </source>
</reference>
<sequence>MASFLSRLPQGKVVAALIVLLLVVDQVIKIWVKTTMVLGQSHVVAPWFQIHFVENPGMAFGIELGSKLFLSLFRIVAMGFCIYLLAKLVRKREHTLAFLSCLSLIIAGGIGNIIDSIFYGVIFSGSHGQIAQLFPSGGGYETWFHGRVVDMFYFPLIEGVFPSWLPFWGGEEFVFFHPVFNFADSCISIGLILLLVCYPRTVSLLLDGKKTLPEGTTEDSEPTKRE</sequence>
<comment type="function">
    <text evidence="1">This protein specifically catalyzes the removal of signal peptides from prolipoproteins.</text>
</comment>
<comment type="catalytic activity">
    <reaction evidence="1">
        <text>Release of signal peptides from bacterial membrane prolipoproteins. Hydrolyzes -Xaa-Yaa-Zaa-|-(S,diacylglyceryl)Cys-, in which Xaa is hydrophobic (preferably Leu), and Yaa (Ala or Ser) and Zaa (Gly or Ala) have small, neutral side chains.</text>
        <dbReference type="EC" id="3.4.23.36"/>
    </reaction>
</comment>
<comment type="pathway">
    <text evidence="1">Protein modification; lipoprotein biosynthesis (signal peptide cleavage).</text>
</comment>
<comment type="subcellular location">
    <subcellularLocation>
        <location evidence="1">Cell inner membrane</location>
        <topology evidence="1">Multi-pass membrane protein</topology>
    </subcellularLocation>
</comment>
<comment type="similarity">
    <text evidence="1">Belongs to the peptidase A8 family.</text>
</comment>
<dbReference type="EC" id="3.4.23.36" evidence="1"/>
<dbReference type="EMBL" id="AP009380">
    <property type="protein sequence ID" value="BAG33034.1"/>
    <property type="molecule type" value="Genomic_DNA"/>
</dbReference>
<dbReference type="RefSeq" id="WP_004584054.1">
    <property type="nucleotide sequence ID" value="NZ_CP025930.1"/>
</dbReference>
<dbReference type="SMR" id="B2RI39"/>
<dbReference type="GeneID" id="29255745"/>
<dbReference type="KEGG" id="pgn:PGN_0515"/>
<dbReference type="eggNOG" id="COG0597">
    <property type="taxonomic scope" value="Bacteria"/>
</dbReference>
<dbReference type="HOGENOM" id="CLU_083252_0_1_10"/>
<dbReference type="OrthoDB" id="9810259at2"/>
<dbReference type="BioCyc" id="PGIN431947:G1G2V-561-MONOMER"/>
<dbReference type="UniPathway" id="UPA00665"/>
<dbReference type="Proteomes" id="UP000008842">
    <property type="component" value="Chromosome"/>
</dbReference>
<dbReference type="GO" id="GO:0005886">
    <property type="term" value="C:plasma membrane"/>
    <property type="evidence" value="ECO:0007669"/>
    <property type="project" value="UniProtKB-SubCell"/>
</dbReference>
<dbReference type="GO" id="GO:0004190">
    <property type="term" value="F:aspartic-type endopeptidase activity"/>
    <property type="evidence" value="ECO:0007669"/>
    <property type="project" value="UniProtKB-UniRule"/>
</dbReference>
<dbReference type="GO" id="GO:0006508">
    <property type="term" value="P:proteolysis"/>
    <property type="evidence" value="ECO:0007669"/>
    <property type="project" value="UniProtKB-KW"/>
</dbReference>
<dbReference type="HAMAP" id="MF_00161">
    <property type="entry name" value="LspA"/>
    <property type="match status" value="1"/>
</dbReference>
<dbReference type="InterPro" id="IPR001872">
    <property type="entry name" value="Peptidase_A8"/>
</dbReference>
<dbReference type="NCBIfam" id="NF011369">
    <property type="entry name" value="PRK14788.1"/>
    <property type="match status" value="1"/>
</dbReference>
<dbReference type="PANTHER" id="PTHR33695">
    <property type="entry name" value="LIPOPROTEIN SIGNAL PEPTIDASE"/>
    <property type="match status" value="1"/>
</dbReference>
<dbReference type="PANTHER" id="PTHR33695:SF1">
    <property type="entry name" value="LIPOPROTEIN SIGNAL PEPTIDASE"/>
    <property type="match status" value="1"/>
</dbReference>
<dbReference type="Pfam" id="PF01252">
    <property type="entry name" value="Peptidase_A8"/>
    <property type="match status" value="1"/>
</dbReference>
<dbReference type="PRINTS" id="PR00781">
    <property type="entry name" value="LIPOSIGPTASE"/>
</dbReference>
<accession>B2RI39</accession>
<gene>
    <name evidence="1" type="primary">lspA</name>
    <name type="ordered locus">PGN_0515</name>
</gene>
<name>LSPA_PORG3</name>
<evidence type="ECO:0000255" key="1">
    <source>
        <dbReference type="HAMAP-Rule" id="MF_00161"/>
    </source>
</evidence>
<protein>
    <recommendedName>
        <fullName evidence="1">Lipoprotein signal peptidase</fullName>
        <ecNumber evidence="1">3.4.23.36</ecNumber>
    </recommendedName>
    <alternativeName>
        <fullName evidence="1">Prolipoprotein signal peptidase</fullName>
    </alternativeName>
    <alternativeName>
        <fullName evidence="1">Signal peptidase II</fullName>
        <shortName evidence="1">SPase II</shortName>
    </alternativeName>
</protein>